<keyword id="KW-0007">Acetylation</keyword>
<keyword id="KW-0025">Alternative splicing</keyword>
<keyword id="KW-0256">Endoplasmic reticulum</keyword>
<keyword id="KW-0274">FAD</keyword>
<keyword id="KW-0285">Flavoprotein</keyword>
<keyword id="KW-0472">Membrane</keyword>
<keyword id="KW-0503">Monooxygenase</keyword>
<keyword id="KW-0521">NADP</keyword>
<keyword id="KW-0560">Oxidoreductase</keyword>
<keyword id="KW-1267">Proteomics identification</keyword>
<keyword id="KW-1185">Reference proteome</keyword>
<keyword id="KW-0812">Transmembrane</keyword>
<keyword id="KW-1133">Transmembrane helix</keyword>
<name>FMO1_HUMAN</name>
<dbReference type="EC" id="1.14.13.148" evidence="2"/>
<dbReference type="EC" id="1.14.13.8" evidence="7"/>
<dbReference type="EMBL" id="M64082">
    <property type="protein sequence ID" value="AAA52457.1"/>
    <property type="molecule type" value="mRNA"/>
</dbReference>
<dbReference type="EMBL" id="AY879266">
    <property type="protein sequence ID" value="AAW56076.1"/>
    <property type="molecule type" value="Genomic_DNA"/>
</dbReference>
<dbReference type="EMBL" id="AK290113">
    <property type="protein sequence ID" value="BAF82802.1"/>
    <property type="molecule type" value="mRNA"/>
</dbReference>
<dbReference type="EMBL" id="AK296198">
    <property type="protein sequence ID" value="BAH12280.1"/>
    <property type="molecule type" value="mRNA"/>
</dbReference>
<dbReference type="EMBL" id="AL021026">
    <property type="status" value="NOT_ANNOTATED_CDS"/>
    <property type="molecule type" value="Genomic_DNA"/>
</dbReference>
<dbReference type="EMBL" id="AL445673">
    <property type="status" value="NOT_ANNOTATED_CDS"/>
    <property type="molecule type" value="Genomic_DNA"/>
</dbReference>
<dbReference type="EMBL" id="AL031274">
    <property type="status" value="NOT_ANNOTATED_CDS"/>
    <property type="molecule type" value="Genomic_DNA"/>
</dbReference>
<dbReference type="EMBL" id="CH471067">
    <property type="protein sequence ID" value="EAW90892.1"/>
    <property type="molecule type" value="Genomic_DNA"/>
</dbReference>
<dbReference type="EMBL" id="BC047129">
    <property type="protein sequence ID" value="AAH47129.1"/>
    <property type="molecule type" value="mRNA"/>
</dbReference>
<dbReference type="CCDS" id="CCDS1294.1">
    <molecule id="Q01740-1"/>
</dbReference>
<dbReference type="CCDS" id="CCDS60351.1">
    <molecule id="Q01740-2"/>
</dbReference>
<dbReference type="PIR" id="A40876">
    <property type="entry name" value="A40876"/>
</dbReference>
<dbReference type="RefSeq" id="NP_001269621.1">
    <property type="nucleotide sequence ID" value="NM_001282692.1"/>
</dbReference>
<dbReference type="RefSeq" id="NP_001269622.1">
    <molecule id="Q01740-1"/>
    <property type="nucleotide sequence ID" value="NM_001282693.2"/>
</dbReference>
<dbReference type="RefSeq" id="NP_001269623.1">
    <molecule id="Q01740-2"/>
    <property type="nucleotide sequence ID" value="NM_001282694.2"/>
</dbReference>
<dbReference type="RefSeq" id="NP_002012.1">
    <molecule id="Q01740-1"/>
    <property type="nucleotide sequence ID" value="NM_002021.3"/>
</dbReference>
<dbReference type="SMR" id="Q01740"/>
<dbReference type="BioGRID" id="108613">
    <property type="interactions" value="11"/>
</dbReference>
<dbReference type="FunCoup" id="Q01740">
    <property type="interactions" value="208"/>
</dbReference>
<dbReference type="IntAct" id="Q01740">
    <property type="interactions" value="10"/>
</dbReference>
<dbReference type="STRING" id="9606.ENSP00000346901"/>
<dbReference type="ChEMBL" id="CHEMBL3430872"/>
<dbReference type="DrugBank" id="DB00185">
    <property type="generic name" value="Cevimeline"/>
</dbReference>
<dbReference type="DrugBank" id="DB00501">
    <property type="generic name" value="Cimetidine"/>
</dbReference>
<dbReference type="DrugBank" id="DB04871">
    <property type="generic name" value="Lorcaserin"/>
</dbReference>
<dbReference type="DrugBank" id="DB00768">
    <property type="generic name" value="Olopatadine"/>
</dbReference>
<dbReference type="DrugBank" id="DB12278">
    <property type="generic name" value="Propiverine"/>
</dbReference>
<dbReference type="DrugBank" id="DB15305">
    <property type="generic name" value="Risdiplam"/>
</dbReference>
<dbReference type="DrugBank" id="DB00675">
    <property type="generic name" value="Tamoxifen"/>
</dbReference>
<dbReference type="DrugBank" id="DB13609">
    <property type="generic name" value="Umifenovir"/>
</dbReference>
<dbReference type="DrugBank" id="DB05294">
    <property type="generic name" value="Vandetanib"/>
</dbReference>
<dbReference type="DrugBank" id="DB00582">
    <property type="generic name" value="Voriconazole"/>
</dbReference>
<dbReference type="DrugBank" id="DB15357">
    <property type="generic name" value="Xanomeline"/>
</dbReference>
<dbReference type="iPTMnet" id="Q01740"/>
<dbReference type="PhosphoSitePlus" id="Q01740"/>
<dbReference type="BioMuta" id="FMO1"/>
<dbReference type="DMDM" id="399505"/>
<dbReference type="MassIVE" id="Q01740"/>
<dbReference type="PaxDb" id="9606-ENSP00000481732"/>
<dbReference type="PeptideAtlas" id="Q01740"/>
<dbReference type="ProteomicsDB" id="57985">
    <molecule id="Q01740-1"/>
</dbReference>
<dbReference type="Antibodypedia" id="20550">
    <property type="antibodies" value="84 antibodies from 22 providers"/>
</dbReference>
<dbReference type="DNASU" id="2326"/>
<dbReference type="Ensembl" id="ENST00000354841.4">
    <molecule id="Q01740-1"/>
    <property type="protein sequence ID" value="ENSP00000346901.4"/>
    <property type="gene ID" value="ENSG00000010932.17"/>
</dbReference>
<dbReference type="Ensembl" id="ENST00000367750.7">
    <molecule id="Q01740-1"/>
    <property type="protein sequence ID" value="ENSP00000356724.3"/>
    <property type="gene ID" value="ENSG00000010932.17"/>
</dbReference>
<dbReference type="Ensembl" id="ENST00000402921.6">
    <molecule id="Q01740-2"/>
    <property type="protein sequence ID" value="ENSP00000385543.2"/>
    <property type="gene ID" value="ENSG00000010932.17"/>
</dbReference>
<dbReference type="Ensembl" id="ENST00000617670.6">
    <molecule id="Q01740-1"/>
    <property type="protein sequence ID" value="ENSP00000481732.1"/>
    <property type="gene ID" value="ENSG00000010932.17"/>
</dbReference>
<dbReference type="GeneID" id="2326"/>
<dbReference type="KEGG" id="hsa:2326"/>
<dbReference type="MANE-Select" id="ENST00000617670.6">
    <property type="protein sequence ID" value="ENSP00000481732.1"/>
    <property type="RefSeq nucleotide sequence ID" value="NM_001282693.2"/>
    <property type="RefSeq protein sequence ID" value="NP_001269622.1"/>
</dbReference>
<dbReference type="UCSC" id="uc001ghl.5">
    <molecule id="Q01740-1"/>
    <property type="organism name" value="human"/>
</dbReference>
<dbReference type="AGR" id="HGNC:3769"/>
<dbReference type="CTD" id="2326"/>
<dbReference type="DisGeNET" id="2326"/>
<dbReference type="GeneCards" id="FMO1"/>
<dbReference type="HGNC" id="HGNC:3769">
    <property type="gene designation" value="FMO1"/>
</dbReference>
<dbReference type="HPA" id="ENSG00000010932">
    <property type="expression patterns" value="Tissue enriched (kidney)"/>
</dbReference>
<dbReference type="MIM" id="136130">
    <property type="type" value="gene"/>
</dbReference>
<dbReference type="neXtProt" id="NX_Q01740"/>
<dbReference type="OpenTargets" id="ENSG00000010932"/>
<dbReference type="PharmGKB" id="PA165"/>
<dbReference type="VEuPathDB" id="HostDB:ENSG00000010932"/>
<dbReference type="eggNOG" id="KOG1399">
    <property type="taxonomic scope" value="Eukaryota"/>
</dbReference>
<dbReference type="GeneTree" id="ENSGT00940000160945"/>
<dbReference type="HOGENOM" id="CLU_006909_8_2_1"/>
<dbReference type="InParanoid" id="Q01740"/>
<dbReference type="OMA" id="VMIKEVN"/>
<dbReference type="OrthoDB" id="66881at2759"/>
<dbReference type="PAN-GO" id="Q01740">
    <property type="GO annotations" value="1 GO annotation based on evolutionary models"/>
</dbReference>
<dbReference type="PhylomeDB" id="Q01740"/>
<dbReference type="TreeFam" id="TF105285"/>
<dbReference type="BioCyc" id="MetaCyc:HS00295-MONOMER"/>
<dbReference type="BRENDA" id="1.14.13.8">
    <property type="organism ID" value="2681"/>
</dbReference>
<dbReference type="PathwayCommons" id="Q01740"/>
<dbReference type="Reactome" id="R-HSA-1614558">
    <property type="pathway name" value="Degradation of cysteine and homocysteine"/>
</dbReference>
<dbReference type="Reactome" id="R-HSA-217271">
    <property type="pathway name" value="FMO oxidises nucleophiles"/>
</dbReference>
<dbReference type="SABIO-RK" id="Q01740"/>
<dbReference type="SignaLink" id="Q01740"/>
<dbReference type="BioGRID-ORCS" id="2326">
    <property type="hits" value="44 hits in 1151 CRISPR screens"/>
</dbReference>
<dbReference type="GeneWiki" id="Flavin_containing_monooxygenase_1"/>
<dbReference type="GenomeRNAi" id="2326"/>
<dbReference type="Pharos" id="Q01740">
    <property type="development level" value="Tbio"/>
</dbReference>
<dbReference type="PRO" id="PR:Q01740"/>
<dbReference type="Proteomes" id="UP000005640">
    <property type="component" value="Chromosome 1"/>
</dbReference>
<dbReference type="RNAct" id="Q01740">
    <property type="molecule type" value="protein"/>
</dbReference>
<dbReference type="Bgee" id="ENSG00000010932">
    <property type="expression patterns" value="Expressed in nephron tubule and 135 other cell types or tissues"/>
</dbReference>
<dbReference type="ExpressionAtlas" id="Q01740">
    <property type="expression patterns" value="baseline and differential"/>
</dbReference>
<dbReference type="GO" id="GO:0005788">
    <property type="term" value="C:endoplasmic reticulum lumen"/>
    <property type="evidence" value="ECO:0000304"/>
    <property type="project" value="Reactome"/>
</dbReference>
<dbReference type="GO" id="GO:0005789">
    <property type="term" value="C:endoplasmic reticulum membrane"/>
    <property type="evidence" value="ECO:0000250"/>
    <property type="project" value="UniProtKB"/>
</dbReference>
<dbReference type="GO" id="GO:0050660">
    <property type="term" value="F:flavin adenine dinucleotide binding"/>
    <property type="evidence" value="ECO:0007669"/>
    <property type="project" value="InterPro"/>
</dbReference>
<dbReference type="GO" id="GO:0047822">
    <property type="term" value="F:hypotaurine monooxygenase activity"/>
    <property type="evidence" value="ECO:0000314"/>
    <property type="project" value="UniProtKB"/>
</dbReference>
<dbReference type="GO" id="GO:0004497">
    <property type="term" value="F:monooxygenase activity"/>
    <property type="evidence" value="ECO:0000314"/>
    <property type="project" value="MGI"/>
</dbReference>
<dbReference type="GO" id="GO:0004499">
    <property type="term" value="F:N,N-dimethylaniline monooxygenase activity"/>
    <property type="evidence" value="ECO:0000314"/>
    <property type="project" value="BHF-UCL"/>
</dbReference>
<dbReference type="GO" id="GO:0050661">
    <property type="term" value="F:NADP binding"/>
    <property type="evidence" value="ECO:0007669"/>
    <property type="project" value="InterPro"/>
</dbReference>
<dbReference type="GO" id="GO:0034899">
    <property type="term" value="F:trimethylamine monooxygenase activity"/>
    <property type="evidence" value="ECO:0000250"/>
    <property type="project" value="UniProtKB"/>
</dbReference>
<dbReference type="GO" id="GO:0097009">
    <property type="term" value="P:energy homeostasis"/>
    <property type="evidence" value="ECO:0007669"/>
    <property type="project" value="Ensembl"/>
</dbReference>
<dbReference type="GO" id="GO:0046322">
    <property type="term" value="P:negative regulation of fatty acid oxidation"/>
    <property type="evidence" value="ECO:0007669"/>
    <property type="project" value="Ensembl"/>
</dbReference>
<dbReference type="GO" id="GO:0006082">
    <property type="term" value="P:organic acid metabolic process"/>
    <property type="evidence" value="ECO:0000314"/>
    <property type="project" value="BHF-UCL"/>
</dbReference>
<dbReference type="GO" id="GO:0032496">
    <property type="term" value="P:response to lipopolysaccharide"/>
    <property type="evidence" value="ECO:0007669"/>
    <property type="project" value="Ensembl"/>
</dbReference>
<dbReference type="GO" id="GO:0000098">
    <property type="term" value="P:sulfur amino acid catabolic process"/>
    <property type="evidence" value="ECO:0000304"/>
    <property type="project" value="Reactome"/>
</dbReference>
<dbReference type="GO" id="GO:0042412">
    <property type="term" value="P:taurine biosynthetic process"/>
    <property type="evidence" value="ECO:0000314"/>
    <property type="project" value="UniProtKB"/>
</dbReference>
<dbReference type="GO" id="GO:0009404">
    <property type="term" value="P:toxin metabolic process"/>
    <property type="evidence" value="ECO:0000314"/>
    <property type="project" value="BHF-UCL"/>
</dbReference>
<dbReference type="GO" id="GO:0006805">
    <property type="term" value="P:xenobiotic metabolic process"/>
    <property type="evidence" value="ECO:0007669"/>
    <property type="project" value="Ensembl"/>
</dbReference>
<dbReference type="FunFam" id="3.50.50.60:FF:000159">
    <property type="entry name" value="Dimethylaniline monooxygenase [N-oxide-forming]"/>
    <property type="match status" value="1"/>
</dbReference>
<dbReference type="Gene3D" id="3.50.50.60">
    <property type="entry name" value="FAD/NAD(P)-binding domain"/>
    <property type="match status" value="1"/>
</dbReference>
<dbReference type="InterPro" id="IPR036188">
    <property type="entry name" value="FAD/NAD-bd_sf"/>
</dbReference>
<dbReference type="InterPro" id="IPR000960">
    <property type="entry name" value="Flavin_mOase"/>
</dbReference>
<dbReference type="InterPro" id="IPR020946">
    <property type="entry name" value="Flavin_mOase-like"/>
</dbReference>
<dbReference type="InterPro" id="IPR002253">
    <property type="entry name" value="Flavin_mOase_1"/>
</dbReference>
<dbReference type="InterPro" id="IPR050346">
    <property type="entry name" value="FMO-like"/>
</dbReference>
<dbReference type="PANTHER" id="PTHR23023">
    <property type="entry name" value="DIMETHYLANILINE MONOOXYGENASE"/>
    <property type="match status" value="1"/>
</dbReference>
<dbReference type="Pfam" id="PF00743">
    <property type="entry name" value="FMO-like"/>
    <property type="match status" value="1"/>
</dbReference>
<dbReference type="PIRSF" id="PIRSF000332">
    <property type="entry name" value="FMO"/>
    <property type="match status" value="1"/>
</dbReference>
<dbReference type="PRINTS" id="PR00370">
    <property type="entry name" value="FMOXYGENASE"/>
</dbReference>
<dbReference type="PRINTS" id="PR01121">
    <property type="entry name" value="FMOXYGENASE1"/>
</dbReference>
<dbReference type="SUPFAM" id="SSF51905">
    <property type="entry name" value="FAD/NAD(P)-binding domain"/>
    <property type="match status" value="2"/>
</dbReference>
<evidence type="ECO:0000250" key="1">
    <source>
        <dbReference type="UniProtKB" id="P16549"/>
    </source>
</evidence>
<evidence type="ECO:0000250" key="2">
    <source>
        <dbReference type="UniProtKB" id="P36365"/>
    </source>
</evidence>
<evidence type="ECO:0000250" key="3">
    <source>
        <dbReference type="UniProtKB" id="Q9HFE4"/>
    </source>
</evidence>
<evidence type="ECO:0000255" key="4"/>
<evidence type="ECO:0000269" key="5">
    <source>
    </source>
</evidence>
<evidence type="ECO:0000269" key="6">
    <source>
    </source>
</evidence>
<evidence type="ECO:0000269" key="7">
    <source>
    </source>
</evidence>
<evidence type="ECO:0000269" key="8">
    <source ref="2"/>
</evidence>
<evidence type="ECO:0000303" key="9">
    <source>
    </source>
</evidence>
<evidence type="ECO:0000305" key="10"/>
<evidence type="ECO:0000305" key="11">
    <source>
    </source>
</evidence>
<evidence type="ECO:0000312" key="12">
    <source>
        <dbReference type="HGNC" id="HGNC:3769"/>
    </source>
</evidence>
<feature type="initiator methionine" description="Removed" evidence="1">
    <location>
        <position position="1"/>
    </location>
</feature>
<feature type="chain" id="PRO_0000147639" description="Flavin-containing monooxygenase 1">
    <location>
        <begin position="2"/>
        <end position="532"/>
    </location>
</feature>
<feature type="topological domain" description="Lumenal" evidence="1">
    <location>
        <begin position="2"/>
        <end position="510"/>
    </location>
</feature>
<feature type="transmembrane region" description="Helical" evidence="4">
    <location>
        <begin position="511"/>
        <end position="531"/>
    </location>
</feature>
<feature type="topological domain" description="Cytoplasmic" evidence="1">
    <location>
        <position position="532"/>
    </location>
</feature>
<feature type="binding site" evidence="3">
    <location>
        <begin position="9"/>
        <end position="13"/>
    </location>
    <ligand>
        <name>FAD</name>
        <dbReference type="ChEBI" id="CHEBI:57692"/>
    </ligand>
</feature>
<feature type="binding site" evidence="3">
    <location>
        <position position="32"/>
    </location>
    <ligand>
        <name>FAD</name>
        <dbReference type="ChEBI" id="CHEBI:57692"/>
    </ligand>
</feature>
<feature type="binding site" evidence="3">
    <location>
        <begin position="40"/>
        <end position="41"/>
    </location>
    <ligand>
        <name>FAD</name>
        <dbReference type="ChEBI" id="CHEBI:57692"/>
    </ligand>
</feature>
<feature type="binding site" evidence="3">
    <location>
        <begin position="60"/>
        <end position="61"/>
    </location>
    <ligand>
        <name>NADP(+)</name>
        <dbReference type="ChEBI" id="CHEBI:58349"/>
    </ligand>
</feature>
<feature type="binding site" evidence="3">
    <location>
        <begin position="61"/>
        <end position="62"/>
    </location>
    <ligand>
        <name>FAD</name>
        <dbReference type="ChEBI" id="CHEBI:57692"/>
    </ligand>
</feature>
<feature type="binding site" evidence="3">
    <location>
        <begin position="195"/>
        <end position="198"/>
    </location>
    <ligand>
        <name>NADP(+)</name>
        <dbReference type="ChEBI" id="CHEBI:58349"/>
    </ligand>
</feature>
<feature type="modified residue" description="N-acetylalanine" evidence="1">
    <location>
        <position position="2"/>
    </location>
</feature>
<feature type="splice variant" id="VSP_054543" description="In isoform 2." evidence="9">
    <location>
        <begin position="45"/>
        <end position="107"/>
    </location>
</feature>
<feature type="sequence variant" id="VAR_015358" description="In dbSNP:rs56841822." evidence="5">
    <original>H</original>
    <variation>Q</variation>
    <location>
        <position position="97"/>
    </location>
</feature>
<feature type="sequence variant" id="VAR_022204" description="In dbSNP:rs16864310." evidence="8">
    <original>R</original>
    <variation>Q</variation>
    <location>
        <position position="223"/>
    </location>
</feature>
<feature type="sequence variant" id="VAR_022205" evidence="8">
    <original>S</original>
    <variation>T</variation>
    <location>
        <position position="227"/>
    </location>
</feature>
<feature type="sequence variant" id="VAR_015359" description="In dbSNP:rs28360418." evidence="5">
    <original>I</original>
    <variation>T</variation>
    <location>
        <position position="303"/>
    </location>
</feature>
<feature type="sequence variant" id="VAR_015360" description="In dbSNP:rs16864314." evidence="5 8">
    <original>I</original>
    <variation>V</variation>
    <location>
        <position position="303"/>
    </location>
</feature>
<feature type="sequence variant" id="VAR_022206" description="In dbSNP:rs28360419." evidence="8">
    <original>I</original>
    <variation>V</variation>
    <location>
        <position position="322"/>
    </location>
</feature>
<feature type="sequence variant" id="VAR_022207" description="In dbSNP:rs28360420." evidence="8">
    <original>F</original>
    <variation>L</variation>
    <location>
        <position position="327"/>
    </location>
</feature>
<feature type="sequence variant" id="VAR_022208" description="In dbSNP:rs28360421." evidence="8">
    <original>K</original>
    <variation>R</variation>
    <location>
        <position position="373"/>
    </location>
</feature>
<feature type="sequence variant" id="VAR_022209" description="In dbSNP:rs28360433." evidence="8">
    <original>R</original>
    <variation>H</variation>
    <location>
        <position position="474"/>
    </location>
</feature>
<reference key="1">
    <citation type="journal article" date="1991" name="J. Biol. Chem.">
        <title>Cloning, primary sequence, and chromosomal mapping of a human flavin-containing monooxygenase (FMO1).</title>
        <authorList>
            <person name="Dolphin C.T."/>
            <person name="Shephard E.A."/>
            <person name="Povey S."/>
            <person name="Palmer C.N.A."/>
            <person name="Ziegler D.M."/>
            <person name="Ayesh R."/>
            <person name="Smith R.L."/>
            <person name="Phillips I.R."/>
        </authorList>
    </citation>
    <scope>NUCLEOTIDE SEQUENCE [MRNA] (ISOFORM 1)</scope>
    <scope>TISSUE SPECIFICITY</scope>
    <source>
        <tissue>Liver</tissue>
    </source>
</reference>
<reference key="2">
    <citation type="submission" date="2005-01" db="EMBL/GenBank/DDBJ databases">
        <authorList>
            <consortium name="NIEHS SNPs program"/>
        </authorList>
    </citation>
    <scope>NUCLEOTIDE SEQUENCE [GENOMIC DNA]</scope>
    <scope>VARIANTS GLN-223; THR-227; VAL-303; VAL-322; LEU-327; ARG-373 AND HIS-474</scope>
</reference>
<reference key="3">
    <citation type="journal article" date="2004" name="Nat. Genet.">
        <title>Complete sequencing and characterization of 21,243 full-length human cDNAs.</title>
        <authorList>
            <person name="Ota T."/>
            <person name="Suzuki Y."/>
            <person name="Nishikawa T."/>
            <person name="Otsuki T."/>
            <person name="Sugiyama T."/>
            <person name="Irie R."/>
            <person name="Wakamatsu A."/>
            <person name="Hayashi K."/>
            <person name="Sato H."/>
            <person name="Nagai K."/>
            <person name="Kimura K."/>
            <person name="Makita H."/>
            <person name="Sekine M."/>
            <person name="Obayashi M."/>
            <person name="Nishi T."/>
            <person name="Shibahara T."/>
            <person name="Tanaka T."/>
            <person name="Ishii S."/>
            <person name="Yamamoto J."/>
            <person name="Saito K."/>
            <person name="Kawai Y."/>
            <person name="Isono Y."/>
            <person name="Nakamura Y."/>
            <person name="Nagahari K."/>
            <person name="Murakami K."/>
            <person name="Yasuda T."/>
            <person name="Iwayanagi T."/>
            <person name="Wagatsuma M."/>
            <person name="Shiratori A."/>
            <person name="Sudo H."/>
            <person name="Hosoiri T."/>
            <person name="Kaku Y."/>
            <person name="Kodaira H."/>
            <person name="Kondo H."/>
            <person name="Sugawara M."/>
            <person name="Takahashi M."/>
            <person name="Kanda K."/>
            <person name="Yokoi T."/>
            <person name="Furuya T."/>
            <person name="Kikkawa E."/>
            <person name="Omura Y."/>
            <person name="Abe K."/>
            <person name="Kamihara K."/>
            <person name="Katsuta N."/>
            <person name="Sato K."/>
            <person name="Tanikawa M."/>
            <person name="Yamazaki M."/>
            <person name="Ninomiya K."/>
            <person name="Ishibashi T."/>
            <person name="Yamashita H."/>
            <person name="Murakawa K."/>
            <person name="Fujimori K."/>
            <person name="Tanai H."/>
            <person name="Kimata M."/>
            <person name="Watanabe M."/>
            <person name="Hiraoka S."/>
            <person name="Chiba Y."/>
            <person name="Ishida S."/>
            <person name="Ono Y."/>
            <person name="Takiguchi S."/>
            <person name="Watanabe S."/>
            <person name="Yosida M."/>
            <person name="Hotuta T."/>
            <person name="Kusano J."/>
            <person name="Kanehori K."/>
            <person name="Takahashi-Fujii A."/>
            <person name="Hara H."/>
            <person name="Tanase T.-O."/>
            <person name="Nomura Y."/>
            <person name="Togiya S."/>
            <person name="Komai F."/>
            <person name="Hara R."/>
            <person name="Takeuchi K."/>
            <person name="Arita M."/>
            <person name="Imose N."/>
            <person name="Musashino K."/>
            <person name="Yuuki H."/>
            <person name="Oshima A."/>
            <person name="Sasaki N."/>
            <person name="Aotsuka S."/>
            <person name="Yoshikawa Y."/>
            <person name="Matsunawa H."/>
            <person name="Ichihara T."/>
            <person name="Shiohata N."/>
            <person name="Sano S."/>
            <person name="Moriya S."/>
            <person name="Momiyama H."/>
            <person name="Satoh N."/>
            <person name="Takami S."/>
            <person name="Terashima Y."/>
            <person name="Suzuki O."/>
            <person name="Nakagawa S."/>
            <person name="Senoh A."/>
            <person name="Mizoguchi H."/>
            <person name="Goto Y."/>
            <person name="Shimizu F."/>
            <person name="Wakebe H."/>
            <person name="Hishigaki H."/>
            <person name="Watanabe T."/>
            <person name="Sugiyama A."/>
            <person name="Takemoto M."/>
            <person name="Kawakami B."/>
            <person name="Yamazaki M."/>
            <person name="Watanabe K."/>
            <person name="Kumagai A."/>
            <person name="Itakura S."/>
            <person name="Fukuzumi Y."/>
            <person name="Fujimori Y."/>
            <person name="Komiyama M."/>
            <person name="Tashiro H."/>
            <person name="Tanigami A."/>
            <person name="Fujiwara T."/>
            <person name="Ono T."/>
            <person name="Yamada K."/>
            <person name="Fujii Y."/>
            <person name="Ozaki K."/>
            <person name="Hirao M."/>
            <person name="Ohmori Y."/>
            <person name="Kawabata A."/>
            <person name="Hikiji T."/>
            <person name="Kobatake N."/>
            <person name="Inagaki H."/>
            <person name="Ikema Y."/>
            <person name="Okamoto S."/>
            <person name="Okitani R."/>
            <person name="Kawakami T."/>
            <person name="Noguchi S."/>
            <person name="Itoh T."/>
            <person name="Shigeta K."/>
            <person name="Senba T."/>
            <person name="Matsumura K."/>
            <person name="Nakajima Y."/>
            <person name="Mizuno T."/>
            <person name="Morinaga M."/>
            <person name="Sasaki M."/>
            <person name="Togashi T."/>
            <person name="Oyama M."/>
            <person name="Hata H."/>
            <person name="Watanabe M."/>
            <person name="Komatsu T."/>
            <person name="Mizushima-Sugano J."/>
            <person name="Satoh T."/>
            <person name="Shirai Y."/>
            <person name="Takahashi Y."/>
            <person name="Nakagawa K."/>
            <person name="Okumura K."/>
            <person name="Nagase T."/>
            <person name="Nomura N."/>
            <person name="Kikuchi H."/>
            <person name="Masuho Y."/>
            <person name="Yamashita R."/>
            <person name="Nakai K."/>
            <person name="Yada T."/>
            <person name="Nakamura Y."/>
            <person name="Ohara O."/>
            <person name="Isogai T."/>
            <person name="Sugano S."/>
        </authorList>
    </citation>
    <scope>NUCLEOTIDE SEQUENCE [LARGE SCALE MRNA] (ISOFORMS 1 AND 2)</scope>
    <source>
        <tissue>Thalamus</tissue>
    </source>
</reference>
<reference key="4">
    <citation type="journal article" date="2006" name="Nature">
        <title>The DNA sequence and biological annotation of human chromosome 1.</title>
        <authorList>
            <person name="Gregory S.G."/>
            <person name="Barlow K.F."/>
            <person name="McLay K.E."/>
            <person name="Kaul R."/>
            <person name="Swarbreck D."/>
            <person name="Dunham A."/>
            <person name="Scott C.E."/>
            <person name="Howe K.L."/>
            <person name="Woodfine K."/>
            <person name="Spencer C.C.A."/>
            <person name="Jones M.C."/>
            <person name="Gillson C."/>
            <person name="Searle S."/>
            <person name="Zhou Y."/>
            <person name="Kokocinski F."/>
            <person name="McDonald L."/>
            <person name="Evans R."/>
            <person name="Phillips K."/>
            <person name="Atkinson A."/>
            <person name="Cooper R."/>
            <person name="Jones C."/>
            <person name="Hall R.E."/>
            <person name="Andrews T.D."/>
            <person name="Lloyd C."/>
            <person name="Ainscough R."/>
            <person name="Almeida J.P."/>
            <person name="Ambrose K.D."/>
            <person name="Anderson F."/>
            <person name="Andrew R.W."/>
            <person name="Ashwell R.I.S."/>
            <person name="Aubin K."/>
            <person name="Babbage A.K."/>
            <person name="Bagguley C.L."/>
            <person name="Bailey J."/>
            <person name="Beasley H."/>
            <person name="Bethel G."/>
            <person name="Bird C.P."/>
            <person name="Bray-Allen S."/>
            <person name="Brown J.Y."/>
            <person name="Brown A.J."/>
            <person name="Buckley D."/>
            <person name="Burton J."/>
            <person name="Bye J."/>
            <person name="Carder C."/>
            <person name="Chapman J.C."/>
            <person name="Clark S.Y."/>
            <person name="Clarke G."/>
            <person name="Clee C."/>
            <person name="Cobley V."/>
            <person name="Collier R.E."/>
            <person name="Corby N."/>
            <person name="Coville G.J."/>
            <person name="Davies J."/>
            <person name="Deadman R."/>
            <person name="Dunn M."/>
            <person name="Earthrowl M."/>
            <person name="Ellington A.G."/>
            <person name="Errington H."/>
            <person name="Frankish A."/>
            <person name="Frankland J."/>
            <person name="French L."/>
            <person name="Garner P."/>
            <person name="Garnett J."/>
            <person name="Gay L."/>
            <person name="Ghori M.R.J."/>
            <person name="Gibson R."/>
            <person name="Gilby L.M."/>
            <person name="Gillett W."/>
            <person name="Glithero R.J."/>
            <person name="Grafham D.V."/>
            <person name="Griffiths C."/>
            <person name="Griffiths-Jones S."/>
            <person name="Grocock R."/>
            <person name="Hammond S."/>
            <person name="Harrison E.S.I."/>
            <person name="Hart E."/>
            <person name="Haugen E."/>
            <person name="Heath P.D."/>
            <person name="Holmes S."/>
            <person name="Holt K."/>
            <person name="Howden P.J."/>
            <person name="Hunt A.R."/>
            <person name="Hunt S.E."/>
            <person name="Hunter G."/>
            <person name="Isherwood J."/>
            <person name="James R."/>
            <person name="Johnson C."/>
            <person name="Johnson D."/>
            <person name="Joy A."/>
            <person name="Kay M."/>
            <person name="Kershaw J.K."/>
            <person name="Kibukawa M."/>
            <person name="Kimberley A.M."/>
            <person name="King A."/>
            <person name="Knights A.J."/>
            <person name="Lad H."/>
            <person name="Laird G."/>
            <person name="Lawlor S."/>
            <person name="Leongamornlert D.A."/>
            <person name="Lloyd D.M."/>
            <person name="Loveland J."/>
            <person name="Lovell J."/>
            <person name="Lush M.J."/>
            <person name="Lyne R."/>
            <person name="Martin S."/>
            <person name="Mashreghi-Mohammadi M."/>
            <person name="Matthews L."/>
            <person name="Matthews N.S.W."/>
            <person name="McLaren S."/>
            <person name="Milne S."/>
            <person name="Mistry S."/>
            <person name="Moore M.J.F."/>
            <person name="Nickerson T."/>
            <person name="O'Dell C.N."/>
            <person name="Oliver K."/>
            <person name="Palmeiri A."/>
            <person name="Palmer S.A."/>
            <person name="Parker A."/>
            <person name="Patel D."/>
            <person name="Pearce A.V."/>
            <person name="Peck A.I."/>
            <person name="Pelan S."/>
            <person name="Phelps K."/>
            <person name="Phillimore B.J."/>
            <person name="Plumb R."/>
            <person name="Rajan J."/>
            <person name="Raymond C."/>
            <person name="Rouse G."/>
            <person name="Saenphimmachak C."/>
            <person name="Sehra H.K."/>
            <person name="Sheridan E."/>
            <person name="Shownkeen R."/>
            <person name="Sims S."/>
            <person name="Skuce C.D."/>
            <person name="Smith M."/>
            <person name="Steward C."/>
            <person name="Subramanian S."/>
            <person name="Sycamore N."/>
            <person name="Tracey A."/>
            <person name="Tromans A."/>
            <person name="Van Helmond Z."/>
            <person name="Wall M."/>
            <person name="Wallis J.M."/>
            <person name="White S."/>
            <person name="Whitehead S.L."/>
            <person name="Wilkinson J.E."/>
            <person name="Willey D.L."/>
            <person name="Williams H."/>
            <person name="Wilming L."/>
            <person name="Wray P.W."/>
            <person name="Wu Z."/>
            <person name="Coulson A."/>
            <person name="Vaudin M."/>
            <person name="Sulston J.E."/>
            <person name="Durbin R.M."/>
            <person name="Hubbard T."/>
            <person name="Wooster R."/>
            <person name="Dunham I."/>
            <person name="Carter N.P."/>
            <person name="McVean G."/>
            <person name="Ross M.T."/>
            <person name="Harrow J."/>
            <person name="Olson M.V."/>
            <person name="Beck S."/>
            <person name="Rogers J."/>
            <person name="Bentley D.R."/>
        </authorList>
    </citation>
    <scope>NUCLEOTIDE SEQUENCE [LARGE SCALE GENOMIC DNA]</scope>
</reference>
<reference key="5">
    <citation type="submission" date="2005-07" db="EMBL/GenBank/DDBJ databases">
        <authorList>
            <person name="Mural R.J."/>
            <person name="Istrail S."/>
            <person name="Sutton G.G."/>
            <person name="Florea L."/>
            <person name="Halpern A.L."/>
            <person name="Mobarry C.M."/>
            <person name="Lippert R."/>
            <person name="Walenz B."/>
            <person name="Shatkay H."/>
            <person name="Dew I."/>
            <person name="Miller J.R."/>
            <person name="Flanigan M.J."/>
            <person name="Edwards N.J."/>
            <person name="Bolanos R."/>
            <person name="Fasulo D."/>
            <person name="Halldorsson B.V."/>
            <person name="Hannenhalli S."/>
            <person name="Turner R."/>
            <person name="Yooseph S."/>
            <person name="Lu F."/>
            <person name="Nusskern D.R."/>
            <person name="Shue B.C."/>
            <person name="Zheng X.H."/>
            <person name="Zhong F."/>
            <person name="Delcher A.L."/>
            <person name="Huson D.H."/>
            <person name="Kravitz S.A."/>
            <person name="Mouchard L."/>
            <person name="Reinert K."/>
            <person name="Remington K.A."/>
            <person name="Clark A.G."/>
            <person name="Waterman M.S."/>
            <person name="Eichler E.E."/>
            <person name="Adams M.D."/>
            <person name="Hunkapiller M.W."/>
            <person name="Myers E.W."/>
            <person name="Venter J.C."/>
        </authorList>
    </citation>
    <scope>NUCLEOTIDE SEQUENCE [LARGE SCALE GENOMIC DNA]</scope>
</reference>
<reference key="6">
    <citation type="journal article" date="2004" name="Genome Res.">
        <title>The status, quality, and expansion of the NIH full-length cDNA project: the Mammalian Gene Collection (MGC).</title>
        <authorList>
            <consortium name="The MGC Project Team"/>
        </authorList>
    </citation>
    <scope>NUCLEOTIDE SEQUENCE [LARGE SCALE MRNA] (ISOFORM 1)</scope>
    <source>
        <tissue>Colon</tissue>
    </source>
</reference>
<reference key="7">
    <citation type="journal article" date="2020" name="Drug Metab. Dispos.">
        <title>Flavin-Containing Monooxygenase 1 Catalyzes the Production of Taurine from Hypotaurine.</title>
        <authorList>
            <person name="Veeravalli S."/>
            <person name="Phillips I.R."/>
            <person name="Freire R.T."/>
            <person name="Varshavi D."/>
            <person name="Everett J.R."/>
            <person name="Shephard E.A."/>
        </authorList>
    </citation>
    <scope>FUNCTION</scope>
    <scope>CATALYTIC ACTIVITY</scope>
    <scope>BIOPHYSICOCHEMICAL PROPERTIES</scope>
    <scope>COFACTOR</scope>
</reference>
<reference key="8">
    <citation type="journal article" date="2003" name="Drug Metab. Dispos.">
        <title>Identification of novel variants of the flavin-containing monooxygenase gene family in African Americans.</title>
        <authorList>
            <person name="Furnes B."/>
            <person name="Feng J."/>
            <person name="Sommer S.S."/>
            <person name="Schlenk D."/>
        </authorList>
    </citation>
    <scope>VARIANTS GLN-97; THR-303 AND VAL-303</scope>
</reference>
<proteinExistence type="evidence at protein level"/>
<protein>
    <recommendedName>
        <fullName evidence="11">Flavin-containing monooxygenase 1</fullName>
        <ecNumber evidence="2">1.14.13.148</ecNumber>
        <ecNumber evidence="7">1.14.13.8</ecNumber>
    </recommendedName>
    <alternativeName>
        <fullName evidence="2">Dimethylaniline monooxygenase [N-oxide-forming] 1</fullName>
    </alternativeName>
    <alternativeName>
        <fullName>Dimethylaniline oxidase 1</fullName>
    </alternativeName>
    <alternativeName>
        <fullName>Fetal hepatic flavin-containing monooxygenase 1</fullName>
        <shortName>FMO 1</shortName>
    </alternativeName>
    <alternativeName>
        <fullName evidence="10">Trimethylamine monooxygenase</fullName>
    </alternativeName>
</protein>
<accession>Q01740</accession>
<accession>A8K248</accession>
<accession>B7Z3P4</accession>
<accession>Q5QPT2</accession>
<accession>Q9UJC2</accession>
<sequence>MAKRVAIVGAGVSGLASIKCCLEEGLEPTCFERSDDLGGLWRFTEHVEEGRASLYKSVVSNSCKEMSCYSDFPFPEDYPNYVPNSQFLEYLKMYANHFDLLKHIQFKTKVCSVTKCSDSAVSGQWEVVTMHEEKQESAIFDAVMVCTGFLTNPYLPLDSFPGINAFKGQYFHSRQYKHPDIFKDKRVLVIGMGNSGTDIAVEASHLAEKVFLSTTGGGWVISRIFDSGYPWDMVFMTRFQNMLRNSLPTPIVTWLMERKINNWLNHANYGLIPEDRTQLKEFVLNDELPGRIITGKVFIRPSIKEVKENSVIFNNTSKEEPIDIIVFATGYTFAFPFLDESVVKVEDGQASLYKYIFPAHLQKPTLAIIGLIKPLGSMIPTGETQARWAVRVLKGVNKLPPPSVMIEEINARKENKPSWFGLCYCKALQSDYITYIDELLTYINAKPNLFSMLLTDPHLALTVFFGPCSPYQFRLTGPGKWEGARNAIMTQWDRTFKVIKARVVQESPSPFESFLKVFSFLALLVAIFLIFL</sequence>
<comment type="function">
    <text evidence="2 7">Broad spectrum monooxygenase that catalyzes the oxygenation of a wide variety of nitrogen- and sulfur-containing compounds including xenobiotics (PubMed:32156684). Catalyzes the S-oxygenation of hypotaurine to produce taurine, an organic osmolyte involved in cell volume regulation as well as a variety of cytoprotective and developmental processes (PubMed:32156684). In vitro, catalyzes the N-oxygenation of trimethylamine (TMA) to produce trimethylamine N-oxide (TMAO) and could therefore participate to the detoxification of this compound that is generated by the action of gut microbiota from dietary precursors such as choline, choline containing compounds, betaine or L-carnitine (By similarity).</text>
</comment>
<comment type="catalytic activity">
    <reaction evidence="7">
        <text>hypotaurine + NADPH + O2 + H(+) = taurine + NADP(+) + H2O</text>
        <dbReference type="Rhea" id="RHEA:69819"/>
        <dbReference type="ChEBI" id="CHEBI:15377"/>
        <dbReference type="ChEBI" id="CHEBI:15378"/>
        <dbReference type="ChEBI" id="CHEBI:15379"/>
        <dbReference type="ChEBI" id="CHEBI:57783"/>
        <dbReference type="ChEBI" id="CHEBI:57853"/>
        <dbReference type="ChEBI" id="CHEBI:58349"/>
        <dbReference type="ChEBI" id="CHEBI:507393"/>
        <dbReference type="EC" id="1.14.13.8"/>
    </reaction>
    <physiologicalReaction direction="left-to-right" evidence="7">
        <dbReference type="Rhea" id="RHEA:69820"/>
    </physiologicalReaction>
</comment>
<comment type="catalytic activity">
    <reaction evidence="7">
        <text>hypotaurine + NADH + O2 + H(+) = taurine + NAD(+) + H2O</text>
        <dbReference type="Rhea" id="RHEA:74111"/>
        <dbReference type="ChEBI" id="CHEBI:15377"/>
        <dbReference type="ChEBI" id="CHEBI:15378"/>
        <dbReference type="ChEBI" id="CHEBI:15379"/>
        <dbReference type="ChEBI" id="CHEBI:57540"/>
        <dbReference type="ChEBI" id="CHEBI:57853"/>
        <dbReference type="ChEBI" id="CHEBI:57945"/>
        <dbReference type="ChEBI" id="CHEBI:507393"/>
        <dbReference type="EC" id="1.14.13.8"/>
    </reaction>
    <physiologicalReaction direction="left-to-right" evidence="7">
        <dbReference type="Rhea" id="RHEA:74112"/>
    </physiologicalReaction>
</comment>
<comment type="catalytic activity">
    <reaction evidence="2">
        <text>trimethylamine + NADPH + O2 = trimethylamine N-oxide + NADP(+) + H2O</text>
        <dbReference type="Rhea" id="RHEA:31979"/>
        <dbReference type="ChEBI" id="CHEBI:15377"/>
        <dbReference type="ChEBI" id="CHEBI:15379"/>
        <dbReference type="ChEBI" id="CHEBI:15724"/>
        <dbReference type="ChEBI" id="CHEBI:57783"/>
        <dbReference type="ChEBI" id="CHEBI:58349"/>
        <dbReference type="ChEBI" id="CHEBI:58389"/>
        <dbReference type="EC" id="1.14.13.148"/>
    </reaction>
    <physiologicalReaction direction="left-to-right" evidence="2">
        <dbReference type="Rhea" id="RHEA:31980"/>
    </physiologicalReaction>
</comment>
<comment type="catalytic activity">
    <reaction evidence="2">
        <text>N,N-dimethylaniline + NADPH + O2 + H(+) = N,N-dimethylaniline N-oxide + NADP(+) + H2O</text>
        <dbReference type="Rhea" id="RHEA:24468"/>
        <dbReference type="ChEBI" id="CHEBI:15377"/>
        <dbReference type="ChEBI" id="CHEBI:15378"/>
        <dbReference type="ChEBI" id="CHEBI:15379"/>
        <dbReference type="ChEBI" id="CHEBI:16269"/>
        <dbReference type="ChEBI" id="CHEBI:17735"/>
        <dbReference type="ChEBI" id="CHEBI:57783"/>
        <dbReference type="ChEBI" id="CHEBI:58349"/>
        <dbReference type="EC" id="1.14.13.8"/>
    </reaction>
    <physiologicalReaction direction="left-to-right" evidence="2">
        <dbReference type="Rhea" id="RHEA:24469"/>
    </physiologicalReaction>
</comment>
<comment type="cofactor">
    <cofactor evidence="7">
        <name>FAD</name>
        <dbReference type="ChEBI" id="CHEBI:57692"/>
    </cofactor>
</comment>
<comment type="biophysicochemical properties">
    <kinetics>
        <KM evidence="7">4.1 mM for hypotaurine (at pH 8.5 and 37 degrees Celsius)</KM>
        <text evidence="7">kcat is 55 min(-1) for the NAPDPH-dependent oxygenation of hypotaurine (at pH 8.5 and 37 degrees Celsius).</text>
    </kinetics>
</comment>
<comment type="interaction">
    <interactant intactId="EBI-12701460">
        <id>Q01740</id>
    </interactant>
    <interactant intactId="EBI-625022">
        <id>O43889-2</id>
        <label>CREB3</label>
    </interactant>
    <organismsDiffer>false</organismsDiffer>
    <experiments>3</experiments>
</comment>
<comment type="interaction">
    <interactant intactId="EBI-12701460">
        <id>Q01740</id>
    </interactant>
    <interactant intactId="EBI-2832909">
        <id>Q7Z429</id>
        <label>GRINA</label>
    </interactant>
    <organismsDiffer>false</organismsDiffer>
    <experiments>3</experiments>
</comment>
<comment type="interaction">
    <interactant intactId="EBI-12701460">
        <id>Q01740</id>
    </interactant>
    <interactant intactId="EBI-750776">
        <id>O95214</id>
        <label>LEPROTL1</label>
    </interactant>
    <organismsDiffer>false</organismsDiffer>
    <experiments>3</experiments>
</comment>
<comment type="interaction">
    <interactant intactId="EBI-12701460">
        <id>Q01740</id>
    </interactant>
    <interactant intactId="EBI-373355">
        <id>Q5SR56</id>
        <label>MFSD14B</label>
    </interactant>
    <organismsDiffer>false</organismsDiffer>
    <experiments>3</experiments>
</comment>
<comment type="interaction">
    <interactant intactId="EBI-12701460">
        <id>Q01740</id>
    </interactant>
    <interactant intactId="EBI-7545592">
        <id>Q9H6H4</id>
        <label>REEP4</label>
    </interactant>
    <organismsDiffer>false</organismsDiffer>
    <experiments>3</experiments>
</comment>
<comment type="interaction">
    <interactant intactId="EBI-12701460">
        <id>Q01740</id>
    </interactant>
    <interactant intactId="EBI-18159983">
        <id>Q3KNW5</id>
        <label>SLC10A6</label>
    </interactant>
    <organismsDiffer>false</organismsDiffer>
    <experiments>3</experiments>
</comment>
<comment type="subcellular location">
    <subcellularLocation>
        <location evidence="2">Endoplasmic reticulum membrane</location>
        <topology evidence="4">Single-pass membrane protein</topology>
    </subcellularLocation>
</comment>
<comment type="alternative products">
    <event type="alternative splicing"/>
    <isoform>
        <id>Q01740-1</id>
        <name>1</name>
        <sequence type="displayed"/>
    </isoform>
    <isoform>
        <id>Q01740-2</id>
        <name>2</name>
        <sequence type="described" ref="VSP_054543"/>
    </isoform>
</comment>
<comment type="tissue specificity">
    <text evidence="6">Expressed mainly in fetal and adult liver.</text>
</comment>
<comment type="similarity">
    <text evidence="10">Belongs to the FMO family.</text>
</comment>
<organism>
    <name type="scientific">Homo sapiens</name>
    <name type="common">Human</name>
    <dbReference type="NCBI Taxonomy" id="9606"/>
    <lineage>
        <taxon>Eukaryota</taxon>
        <taxon>Metazoa</taxon>
        <taxon>Chordata</taxon>
        <taxon>Craniata</taxon>
        <taxon>Vertebrata</taxon>
        <taxon>Euteleostomi</taxon>
        <taxon>Mammalia</taxon>
        <taxon>Eutheria</taxon>
        <taxon>Euarchontoglires</taxon>
        <taxon>Primates</taxon>
        <taxon>Haplorrhini</taxon>
        <taxon>Catarrhini</taxon>
        <taxon>Hominidae</taxon>
        <taxon>Homo</taxon>
    </lineage>
</organism>
<gene>
    <name evidence="12" type="primary">FMO1</name>
</gene>